<accession>C3MYP4</accession>
<reference key="1">
    <citation type="journal article" date="2009" name="Proc. Natl. Acad. Sci. U.S.A.">
        <title>Biogeography of the Sulfolobus islandicus pan-genome.</title>
        <authorList>
            <person name="Reno M.L."/>
            <person name="Held N.L."/>
            <person name="Fields C.J."/>
            <person name="Burke P.V."/>
            <person name="Whitaker R.J."/>
        </authorList>
    </citation>
    <scope>NUCLEOTIDE SEQUENCE [LARGE SCALE GENOMIC DNA]</scope>
    <source>
        <strain>M.14.25 / Kamchatka #1</strain>
    </source>
</reference>
<gene>
    <name evidence="1" type="primary">gatC</name>
    <name type="ordered locus">M1425_1268</name>
</gene>
<name>GATC_SACI4</name>
<keyword id="KW-0067">ATP-binding</keyword>
<keyword id="KW-0436">Ligase</keyword>
<keyword id="KW-0547">Nucleotide-binding</keyword>
<keyword id="KW-0648">Protein biosynthesis</keyword>
<comment type="function">
    <text evidence="1">Allows the formation of correctly charged Asn-tRNA(Asn) or Gln-tRNA(Gln) through the transamidation of misacylated Asp-tRNA(Asn) or Glu-tRNA(Gln) in organisms which lack either or both of asparaginyl-tRNA or glutaminyl-tRNA synthetases. The reaction takes place in the presence of glutamine and ATP through an activated phospho-Asp-tRNA(Asn) or phospho-Glu-tRNA(Gln).</text>
</comment>
<comment type="catalytic activity">
    <reaction evidence="1">
        <text>L-glutamyl-tRNA(Gln) + L-glutamine + ATP + H2O = L-glutaminyl-tRNA(Gln) + L-glutamate + ADP + phosphate + H(+)</text>
        <dbReference type="Rhea" id="RHEA:17521"/>
        <dbReference type="Rhea" id="RHEA-COMP:9681"/>
        <dbReference type="Rhea" id="RHEA-COMP:9684"/>
        <dbReference type="ChEBI" id="CHEBI:15377"/>
        <dbReference type="ChEBI" id="CHEBI:15378"/>
        <dbReference type="ChEBI" id="CHEBI:29985"/>
        <dbReference type="ChEBI" id="CHEBI:30616"/>
        <dbReference type="ChEBI" id="CHEBI:43474"/>
        <dbReference type="ChEBI" id="CHEBI:58359"/>
        <dbReference type="ChEBI" id="CHEBI:78520"/>
        <dbReference type="ChEBI" id="CHEBI:78521"/>
        <dbReference type="ChEBI" id="CHEBI:456216"/>
    </reaction>
</comment>
<comment type="catalytic activity">
    <reaction evidence="1">
        <text>L-aspartyl-tRNA(Asn) + L-glutamine + ATP + H2O = L-asparaginyl-tRNA(Asn) + L-glutamate + ADP + phosphate + 2 H(+)</text>
        <dbReference type="Rhea" id="RHEA:14513"/>
        <dbReference type="Rhea" id="RHEA-COMP:9674"/>
        <dbReference type="Rhea" id="RHEA-COMP:9677"/>
        <dbReference type="ChEBI" id="CHEBI:15377"/>
        <dbReference type="ChEBI" id="CHEBI:15378"/>
        <dbReference type="ChEBI" id="CHEBI:29985"/>
        <dbReference type="ChEBI" id="CHEBI:30616"/>
        <dbReference type="ChEBI" id="CHEBI:43474"/>
        <dbReference type="ChEBI" id="CHEBI:58359"/>
        <dbReference type="ChEBI" id="CHEBI:78515"/>
        <dbReference type="ChEBI" id="CHEBI:78516"/>
        <dbReference type="ChEBI" id="CHEBI:456216"/>
    </reaction>
</comment>
<comment type="subunit">
    <text evidence="1">Heterotrimer of A, B and C subunits.</text>
</comment>
<comment type="similarity">
    <text evidence="1">Belongs to the GatC family.</text>
</comment>
<sequence>MKIEVNKNLIKHLENLSLIQLSQNEEKMLENDITNIIKFFEKINELDLSNVEPLFHPLPQGRLRKDTPRDPLDRENALKNVKRKENGYIVGPRTYGE</sequence>
<evidence type="ECO:0000255" key="1">
    <source>
        <dbReference type="HAMAP-Rule" id="MF_00122"/>
    </source>
</evidence>
<evidence type="ECO:0000256" key="2">
    <source>
        <dbReference type="SAM" id="MobiDB-lite"/>
    </source>
</evidence>
<dbReference type="EC" id="6.3.5.-" evidence="1"/>
<dbReference type="EMBL" id="CP001400">
    <property type="protein sequence ID" value="ACP38023.1"/>
    <property type="molecule type" value="Genomic_DNA"/>
</dbReference>
<dbReference type="RefSeq" id="WP_012711275.1">
    <property type="nucleotide sequence ID" value="NC_012588.1"/>
</dbReference>
<dbReference type="SMR" id="C3MYP4"/>
<dbReference type="GeneID" id="84061583"/>
<dbReference type="KEGG" id="sia:M1425_1268"/>
<dbReference type="HOGENOM" id="CLU_105899_4_1_2"/>
<dbReference type="Proteomes" id="UP000001350">
    <property type="component" value="Chromosome"/>
</dbReference>
<dbReference type="GO" id="GO:0050566">
    <property type="term" value="F:asparaginyl-tRNA synthase (glutamine-hydrolyzing) activity"/>
    <property type="evidence" value="ECO:0007669"/>
    <property type="project" value="RHEA"/>
</dbReference>
<dbReference type="GO" id="GO:0005524">
    <property type="term" value="F:ATP binding"/>
    <property type="evidence" value="ECO:0007669"/>
    <property type="project" value="UniProtKB-KW"/>
</dbReference>
<dbReference type="GO" id="GO:0050567">
    <property type="term" value="F:glutaminyl-tRNA synthase (glutamine-hydrolyzing) activity"/>
    <property type="evidence" value="ECO:0007669"/>
    <property type="project" value="UniProtKB-UniRule"/>
</dbReference>
<dbReference type="GO" id="GO:0070681">
    <property type="term" value="P:glutaminyl-tRNAGln biosynthesis via transamidation"/>
    <property type="evidence" value="ECO:0007669"/>
    <property type="project" value="TreeGrafter"/>
</dbReference>
<dbReference type="GO" id="GO:0006450">
    <property type="term" value="P:regulation of translational fidelity"/>
    <property type="evidence" value="ECO:0007669"/>
    <property type="project" value="InterPro"/>
</dbReference>
<dbReference type="GO" id="GO:0006412">
    <property type="term" value="P:translation"/>
    <property type="evidence" value="ECO:0007669"/>
    <property type="project" value="UniProtKB-UniRule"/>
</dbReference>
<dbReference type="Gene3D" id="1.10.20.60">
    <property type="entry name" value="Glu-tRNAGln amidotransferase C subunit, N-terminal domain"/>
    <property type="match status" value="1"/>
</dbReference>
<dbReference type="HAMAP" id="MF_00122">
    <property type="entry name" value="GatC"/>
    <property type="match status" value="1"/>
</dbReference>
<dbReference type="InterPro" id="IPR036113">
    <property type="entry name" value="Asp/Glu-ADT_sf_sub_c"/>
</dbReference>
<dbReference type="InterPro" id="IPR003837">
    <property type="entry name" value="GatC"/>
</dbReference>
<dbReference type="NCBIfam" id="TIGR00135">
    <property type="entry name" value="gatC"/>
    <property type="match status" value="1"/>
</dbReference>
<dbReference type="NCBIfam" id="NF000684">
    <property type="entry name" value="PRK00034.3-4"/>
    <property type="match status" value="1"/>
</dbReference>
<dbReference type="PANTHER" id="PTHR15004">
    <property type="entry name" value="GLUTAMYL-TRNA(GLN) AMIDOTRANSFERASE SUBUNIT C, MITOCHONDRIAL"/>
    <property type="match status" value="1"/>
</dbReference>
<dbReference type="PANTHER" id="PTHR15004:SF0">
    <property type="entry name" value="GLUTAMYL-TRNA(GLN) AMIDOTRANSFERASE SUBUNIT C, MITOCHONDRIAL"/>
    <property type="match status" value="1"/>
</dbReference>
<dbReference type="Pfam" id="PF02686">
    <property type="entry name" value="GatC"/>
    <property type="match status" value="1"/>
</dbReference>
<dbReference type="SUPFAM" id="SSF141000">
    <property type="entry name" value="Glu-tRNAGln amidotransferase C subunit"/>
    <property type="match status" value="1"/>
</dbReference>
<proteinExistence type="inferred from homology"/>
<organism>
    <name type="scientific">Saccharolobus islandicus (strain M.14.25 / Kamchatka #1)</name>
    <name type="common">Sulfolobus islandicus</name>
    <dbReference type="NCBI Taxonomy" id="427317"/>
    <lineage>
        <taxon>Archaea</taxon>
        <taxon>Thermoproteota</taxon>
        <taxon>Thermoprotei</taxon>
        <taxon>Sulfolobales</taxon>
        <taxon>Sulfolobaceae</taxon>
        <taxon>Saccharolobus</taxon>
    </lineage>
</organism>
<feature type="chain" id="PRO_1000203083" description="Aspartyl/glutamyl-tRNA(Asn/Gln) amidotransferase subunit C">
    <location>
        <begin position="1"/>
        <end position="97"/>
    </location>
</feature>
<feature type="region of interest" description="Disordered" evidence="2">
    <location>
        <begin position="58"/>
        <end position="78"/>
    </location>
</feature>
<feature type="compositionally biased region" description="Basic and acidic residues" evidence="2">
    <location>
        <begin position="63"/>
        <end position="77"/>
    </location>
</feature>
<protein>
    <recommendedName>
        <fullName evidence="1">Aspartyl/glutamyl-tRNA(Asn/Gln) amidotransferase subunit C</fullName>
        <shortName evidence="1">Asp/Glu-ADT subunit C</shortName>
        <ecNumber evidence="1">6.3.5.-</ecNumber>
    </recommendedName>
</protein>